<accession>Q12UJ9</accession>
<proteinExistence type="inferred from homology"/>
<reference key="1">
    <citation type="journal article" date="2009" name="ISME J.">
        <title>The genome sequence of the psychrophilic archaeon, Methanococcoides burtonii: the role of genome evolution in cold adaptation.</title>
        <authorList>
            <person name="Allen M.A."/>
            <person name="Lauro F.M."/>
            <person name="Williams T.J."/>
            <person name="Burg D."/>
            <person name="Siddiqui K.S."/>
            <person name="De Francisci D."/>
            <person name="Chong K.W."/>
            <person name="Pilak O."/>
            <person name="Chew H.H."/>
            <person name="De Maere M.Z."/>
            <person name="Ting L."/>
            <person name="Katrib M."/>
            <person name="Ng C."/>
            <person name="Sowers K.R."/>
            <person name="Galperin M.Y."/>
            <person name="Anderson I.J."/>
            <person name="Ivanova N."/>
            <person name="Dalin E."/>
            <person name="Martinez M."/>
            <person name="Lapidus A."/>
            <person name="Hauser L."/>
            <person name="Land M."/>
            <person name="Thomas T."/>
            <person name="Cavicchioli R."/>
        </authorList>
    </citation>
    <scope>NUCLEOTIDE SEQUENCE [LARGE SCALE GENOMIC DNA]</scope>
    <source>
        <strain>DSM 6242 / NBRC 107633 / OCM 468 / ACE-M</strain>
    </source>
</reference>
<sequence length="269" mass="28790">MKKIFAVLGDPIEHSLSPIMHNSAFEALDMDCTYHAFRVEKNDLENALQGAKAMGFGGLNLTVPLKETALKFVDADSLAAKIGAINTIDFKDGIKGYNTDGIGAKRTIEDEGVDIKDKNVLILGAGGAARAIAFTFAEAGANVNIANRTPERAMQLAAEIGDAKGYGLDIVDNGLEDIDILINTTTVGLGNSNGTLVTAEQMHSDLAVFDIVYNPLMTKLLQEAETAGARPITGIMMLVYQGAEAFRIWTGKEPPINVMKKTVMETLDI</sequence>
<gene>
    <name evidence="1" type="primary">aroE</name>
    <name type="ordered locus">Mbur_1998</name>
</gene>
<protein>
    <recommendedName>
        <fullName evidence="1">Shikimate dehydrogenase (NADP(+))</fullName>
        <shortName evidence="1">SDH</shortName>
        <ecNumber evidence="1">1.1.1.25</ecNumber>
    </recommendedName>
</protein>
<organism>
    <name type="scientific">Methanococcoides burtonii (strain DSM 6242 / NBRC 107633 / OCM 468 / ACE-M)</name>
    <dbReference type="NCBI Taxonomy" id="259564"/>
    <lineage>
        <taxon>Archaea</taxon>
        <taxon>Methanobacteriati</taxon>
        <taxon>Methanobacteriota</taxon>
        <taxon>Stenosarchaea group</taxon>
        <taxon>Methanomicrobia</taxon>
        <taxon>Methanosarcinales</taxon>
        <taxon>Methanosarcinaceae</taxon>
        <taxon>Methanococcoides</taxon>
    </lineage>
</organism>
<name>AROE_METBU</name>
<dbReference type="EC" id="1.1.1.25" evidence="1"/>
<dbReference type="EMBL" id="CP000300">
    <property type="protein sequence ID" value="ABE52877.1"/>
    <property type="molecule type" value="Genomic_DNA"/>
</dbReference>
<dbReference type="RefSeq" id="WP_011500018.1">
    <property type="nucleotide sequence ID" value="NC_007955.1"/>
</dbReference>
<dbReference type="SMR" id="Q12UJ9"/>
<dbReference type="STRING" id="259564.Mbur_1998"/>
<dbReference type="GeneID" id="3996950"/>
<dbReference type="KEGG" id="mbu:Mbur_1998"/>
<dbReference type="HOGENOM" id="CLU_044063_4_1_2"/>
<dbReference type="OrthoDB" id="8744at2157"/>
<dbReference type="UniPathway" id="UPA00053">
    <property type="reaction ID" value="UER00087"/>
</dbReference>
<dbReference type="Proteomes" id="UP000001979">
    <property type="component" value="Chromosome"/>
</dbReference>
<dbReference type="GO" id="GO:0050661">
    <property type="term" value="F:NADP binding"/>
    <property type="evidence" value="ECO:0007669"/>
    <property type="project" value="InterPro"/>
</dbReference>
<dbReference type="GO" id="GO:0004764">
    <property type="term" value="F:shikimate 3-dehydrogenase (NADP+) activity"/>
    <property type="evidence" value="ECO:0007669"/>
    <property type="project" value="UniProtKB-UniRule"/>
</dbReference>
<dbReference type="GO" id="GO:0008652">
    <property type="term" value="P:amino acid biosynthetic process"/>
    <property type="evidence" value="ECO:0007669"/>
    <property type="project" value="UniProtKB-KW"/>
</dbReference>
<dbReference type="GO" id="GO:0009073">
    <property type="term" value="P:aromatic amino acid family biosynthetic process"/>
    <property type="evidence" value="ECO:0007669"/>
    <property type="project" value="UniProtKB-KW"/>
</dbReference>
<dbReference type="GO" id="GO:0009423">
    <property type="term" value="P:chorismate biosynthetic process"/>
    <property type="evidence" value="ECO:0007669"/>
    <property type="project" value="UniProtKB-UniRule"/>
</dbReference>
<dbReference type="GO" id="GO:0019632">
    <property type="term" value="P:shikimate metabolic process"/>
    <property type="evidence" value="ECO:0007669"/>
    <property type="project" value="InterPro"/>
</dbReference>
<dbReference type="CDD" id="cd01065">
    <property type="entry name" value="NAD_bind_Shikimate_DH"/>
    <property type="match status" value="1"/>
</dbReference>
<dbReference type="FunFam" id="3.40.50.720:FF:000086">
    <property type="entry name" value="Quinate/shikimate dehydrogenase"/>
    <property type="match status" value="1"/>
</dbReference>
<dbReference type="Gene3D" id="3.40.50.10860">
    <property type="entry name" value="Leucine Dehydrogenase, chain A, domain 1"/>
    <property type="match status" value="1"/>
</dbReference>
<dbReference type="Gene3D" id="3.40.50.720">
    <property type="entry name" value="NAD(P)-binding Rossmann-like Domain"/>
    <property type="match status" value="1"/>
</dbReference>
<dbReference type="HAMAP" id="MF_00222">
    <property type="entry name" value="Shikimate_DH_AroE"/>
    <property type="match status" value="1"/>
</dbReference>
<dbReference type="InterPro" id="IPR046346">
    <property type="entry name" value="Aminoacid_DH-like_N_sf"/>
</dbReference>
<dbReference type="InterPro" id="IPR036291">
    <property type="entry name" value="NAD(P)-bd_dom_sf"/>
</dbReference>
<dbReference type="InterPro" id="IPR041121">
    <property type="entry name" value="SDH_C"/>
</dbReference>
<dbReference type="InterPro" id="IPR011342">
    <property type="entry name" value="Shikimate_DH"/>
</dbReference>
<dbReference type="InterPro" id="IPR013708">
    <property type="entry name" value="Shikimate_DH-bd_N"/>
</dbReference>
<dbReference type="InterPro" id="IPR022893">
    <property type="entry name" value="Shikimate_DH_fam"/>
</dbReference>
<dbReference type="InterPro" id="IPR006151">
    <property type="entry name" value="Shikm_DH/Glu-tRNA_Rdtase"/>
</dbReference>
<dbReference type="NCBIfam" id="TIGR00507">
    <property type="entry name" value="aroE"/>
    <property type="match status" value="1"/>
</dbReference>
<dbReference type="NCBIfam" id="NF001319">
    <property type="entry name" value="PRK00258.3-3"/>
    <property type="match status" value="1"/>
</dbReference>
<dbReference type="PANTHER" id="PTHR21089:SF1">
    <property type="entry name" value="BIFUNCTIONAL 3-DEHYDROQUINATE DEHYDRATASE_SHIKIMATE DEHYDROGENASE, CHLOROPLASTIC"/>
    <property type="match status" value="1"/>
</dbReference>
<dbReference type="PANTHER" id="PTHR21089">
    <property type="entry name" value="SHIKIMATE DEHYDROGENASE"/>
    <property type="match status" value="1"/>
</dbReference>
<dbReference type="Pfam" id="PF18317">
    <property type="entry name" value="SDH_C"/>
    <property type="match status" value="1"/>
</dbReference>
<dbReference type="Pfam" id="PF01488">
    <property type="entry name" value="Shikimate_DH"/>
    <property type="match status" value="1"/>
</dbReference>
<dbReference type="Pfam" id="PF08501">
    <property type="entry name" value="Shikimate_dh_N"/>
    <property type="match status" value="1"/>
</dbReference>
<dbReference type="SUPFAM" id="SSF53223">
    <property type="entry name" value="Aminoacid dehydrogenase-like, N-terminal domain"/>
    <property type="match status" value="1"/>
</dbReference>
<dbReference type="SUPFAM" id="SSF51735">
    <property type="entry name" value="NAD(P)-binding Rossmann-fold domains"/>
    <property type="match status" value="1"/>
</dbReference>
<evidence type="ECO:0000255" key="1">
    <source>
        <dbReference type="HAMAP-Rule" id="MF_00222"/>
    </source>
</evidence>
<comment type="function">
    <text evidence="1">Involved in the biosynthesis of the chorismate, which leads to the biosynthesis of aromatic amino acids. Catalyzes the reversible NADPH linked reduction of 3-dehydroshikimate (DHSA) to yield shikimate (SA).</text>
</comment>
<comment type="catalytic activity">
    <reaction evidence="1">
        <text>shikimate + NADP(+) = 3-dehydroshikimate + NADPH + H(+)</text>
        <dbReference type="Rhea" id="RHEA:17737"/>
        <dbReference type="ChEBI" id="CHEBI:15378"/>
        <dbReference type="ChEBI" id="CHEBI:16630"/>
        <dbReference type="ChEBI" id="CHEBI:36208"/>
        <dbReference type="ChEBI" id="CHEBI:57783"/>
        <dbReference type="ChEBI" id="CHEBI:58349"/>
        <dbReference type="EC" id="1.1.1.25"/>
    </reaction>
</comment>
<comment type="pathway">
    <text evidence="1">Metabolic intermediate biosynthesis; chorismate biosynthesis; chorismate from D-erythrose 4-phosphate and phosphoenolpyruvate: step 4/7.</text>
</comment>
<comment type="subunit">
    <text evidence="1">Homodimer.</text>
</comment>
<comment type="similarity">
    <text evidence="1">Belongs to the shikimate dehydrogenase family.</text>
</comment>
<keyword id="KW-0028">Amino-acid biosynthesis</keyword>
<keyword id="KW-0057">Aromatic amino acid biosynthesis</keyword>
<keyword id="KW-0521">NADP</keyword>
<keyword id="KW-0560">Oxidoreductase</keyword>
<feature type="chain" id="PRO_1000021302" description="Shikimate dehydrogenase (NADP(+))">
    <location>
        <begin position="1"/>
        <end position="269"/>
    </location>
</feature>
<feature type="active site" description="Proton acceptor" evidence="1">
    <location>
        <position position="66"/>
    </location>
</feature>
<feature type="binding site" evidence="1">
    <location>
        <begin position="15"/>
        <end position="17"/>
    </location>
    <ligand>
        <name>shikimate</name>
        <dbReference type="ChEBI" id="CHEBI:36208"/>
    </ligand>
</feature>
<feature type="binding site" evidence="1">
    <location>
        <position position="62"/>
    </location>
    <ligand>
        <name>shikimate</name>
        <dbReference type="ChEBI" id="CHEBI:36208"/>
    </ligand>
</feature>
<feature type="binding site" evidence="1">
    <location>
        <position position="86"/>
    </location>
    <ligand>
        <name>shikimate</name>
        <dbReference type="ChEBI" id="CHEBI:36208"/>
    </ligand>
</feature>
<feature type="binding site" evidence="1">
    <location>
        <position position="100"/>
    </location>
    <ligand>
        <name>shikimate</name>
        <dbReference type="ChEBI" id="CHEBI:36208"/>
    </ligand>
</feature>
<feature type="binding site" evidence="1">
    <location>
        <begin position="124"/>
        <end position="128"/>
    </location>
    <ligand>
        <name>NADP(+)</name>
        <dbReference type="ChEBI" id="CHEBI:58349"/>
    </ligand>
</feature>
<feature type="binding site" evidence="1">
    <location>
        <begin position="147"/>
        <end position="152"/>
    </location>
    <ligand>
        <name>NADP(+)</name>
        <dbReference type="ChEBI" id="CHEBI:58349"/>
    </ligand>
</feature>
<feature type="binding site" evidence="1">
    <location>
        <position position="211"/>
    </location>
    <ligand>
        <name>NADP(+)</name>
        <dbReference type="ChEBI" id="CHEBI:58349"/>
    </ligand>
</feature>
<feature type="binding site" evidence="1">
    <location>
        <position position="213"/>
    </location>
    <ligand>
        <name>shikimate</name>
        <dbReference type="ChEBI" id="CHEBI:36208"/>
    </ligand>
</feature>
<feature type="binding site" evidence="1">
    <location>
        <position position="234"/>
    </location>
    <ligand>
        <name>NADP(+)</name>
        <dbReference type="ChEBI" id="CHEBI:58349"/>
    </ligand>
</feature>